<protein>
    <recommendedName>
        <fullName evidence="3">Small ribosomal subunit protein eS27-like</fullName>
    </recommendedName>
    <alternativeName>
        <fullName>40S ribosomal protein S27-like</fullName>
    </alternativeName>
</protein>
<accession>Q3T0B7</accession>
<reference key="1">
    <citation type="submission" date="2005-08" db="EMBL/GenBank/DDBJ databases">
        <authorList>
            <consortium name="NIH - Mammalian Gene Collection (MGC) project"/>
        </authorList>
    </citation>
    <scope>NUCLEOTIDE SEQUENCE [LARGE SCALE MRNA]</scope>
    <source>
        <strain>Crossbred X Angus</strain>
        <tissue>Ileum</tissue>
    </source>
</reference>
<sequence length="84" mass="9463">MPLARDLLHPSLDEEKKKHKKKRLVQSPNSYFMDVKCPGCYKITTVFSHAQTVVLCVGCSTVLCQPTGGKARLTEGCSFRRKQH</sequence>
<name>RS27L_BOVIN</name>
<dbReference type="EMBL" id="BC102463">
    <property type="protein sequence ID" value="AAI02464.1"/>
    <property type="molecule type" value="mRNA"/>
</dbReference>
<dbReference type="RefSeq" id="NP_001035668.1">
    <property type="nucleotide sequence ID" value="NM_001040578.2"/>
</dbReference>
<dbReference type="RefSeq" id="XP_010802047.1">
    <property type="nucleotide sequence ID" value="XM_010803745.2"/>
</dbReference>
<dbReference type="RefSeq" id="XP_010825353.1">
    <property type="nucleotide sequence ID" value="XM_010827051.2"/>
</dbReference>
<dbReference type="SMR" id="Q3T0B7"/>
<dbReference type="FunCoup" id="Q3T0B7">
    <property type="interactions" value="2098"/>
</dbReference>
<dbReference type="IntAct" id="Q3T0B7">
    <property type="interactions" value="1"/>
</dbReference>
<dbReference type="MINT" id="Q3T0B7"/>
<dbReference type="STRING" id="9913.ENSBTAP00000017146"/>
<dbReference type="PaxDb" id="9913-ENSBTAP00000017146"/>
<dbReference type="Ensembl" id="ENSBTAT00000057552.4">
    <property type="protein sequence ID" value="ENSBTAP00000052430.4"/>
    <property type="gene ID" value="ENSBTAG00000040435.4"/>
</dbReference>
<dbReference type="GeneID" id="614220"/>
<dbReference type="KEGG" id="bta:614220"/>
<dbReference type="CTD" id="51065"/>
<dbReference type="VEuPathDB" id="HostDB:ENSBTAG00000012898"/>
<dbReference type="eggNOG" id="KOG1779">
    <property type="taxonomic scope" value="Eukaryota"/>
</dbReference>
<dbReference type="GeneTree" id="ENSGT00950000182891"/>
<dbReference type="HOGENOM" id="CLU_130128_3_0_1"/>
<dbReference type="InParanoid" id="Q3T0B7"/>
<dbReference type="OMA" id="ERINMPL"/>
<dbReference type="OrthoDB" id="5567124at2759"/>
<dbReference type="TreeFam" id="TF300265"/>
<dbReference type="Reactome" id="R-BTA-156827">
    <property type="pathway name" value="L13a-mediated translational silencing of Ceruloplasmin expression"/>
</dbReference>
<dbReference type="Reactome" id="R-BTA-1799339">
    <property type="pathway name" value="SRP-dependent cotranslational protein targeting to membrane"/>
</dbReference>
<dbReference type="Reactome" id="R-BTA-6791226">
    <property type="pathway name" value="Major pathway of rRNA processing in the nucleolus and cytosol"/>
</dbReference>
<dbReference type="Reactome" id="R-BTA-72649">
    <property type="pathway name" value="Translation initiation complex formation"/>
</dbReference>
<dbReference type="Reactome" id="R-BTA-72689">
    <property type="pathway name" value="Formation of a pool of free 40S subunits"/>
</dbReference>
<dbReference type="Reactome" id="R-BTA-72695">
    <property type="pathway name" value="Formation of the ternary complex, and subsequently, the 43S complex"/>
</dbReference>
<dbReference type="Reactome" id="R-BTA-72702">
    <property type="pathway name" value="Ribosomal scanning and start codon recognition"/>
</dbReference>
<dbReference type="Reactome" id="R-BTA-72706">
    <property type="pathway name" value="GTP hydrolysis and joining of the 60S ribosomal subunit"/>
</dbReference>
<dbReference type="Reactome" id="R-BTA-975956">
    <property type="pathway name" value="Nonsense Mediated Decay (NMD) independent of the Exon Junction Complex (EJC)"/>
</dbReference>
<dbReference type="Reactome" id="R-BTA-975957">
    <property type="pathway name" value="Nonsense Mediated Decay (NMD) enhanced by the Exon Junction Complex (EJC)"/>
</dbReference>
<dbReference type="Proteomes" id="UP000009136">
    <property type="component" value="Chromosome 3"/>
</dbReference>
<dbReference type="Bgee" id="ENSBTAG00000012898">
    <property type="expression patterns" value="Expressed in adult mammalian kidney and 105 other cell types or tissues"/>
</dbReference>
<dbReference type="GO" id="GO:0022627">
    <property type="term" value="C:cytosolic small ribosomal subunit"/>
    <property type="evidence" value="ECO:0000318"/>
    <property type="project" value="GO_Central"/>
</dbReference>
<dbReference type="GO" id="GO:0003723">
    <property type="term" value="F:RNA binding"/>
    <property type="evidence" value="ECO:0000318"/>
    <property type="project" value="GO_Central"/>
</dbReference>
<dbReference type="GO" id="GO:0003735">
    <property type="term" value="F:structural constituent of ribosome"/>
    <property type="evidence" value="ECO:0000318"/>
    <property type="project" value="GO_Central"/>
</dbReference>
<dbReference type="GO" id="GO:0008270">
    <property type="term" value="F:zinc ion binding"/>
    <property type="evidence" value="ECO:0007669"/>
    <property type="project" value="UniProtKB-KW"/>
</dbReference>
<dbReference type="GO" id="GO:0000028">
    <property type="term" value="P:ribosomal small subunit assembly"/>
    <property type="evidence" value="ECO:0000318"/>
    <property type="project" value="GO_Central"/>
</dbReference>
<dbReference type="GO" id="GO:0006412">
    <property type="term" value="P:translation"/>
    <property type="evidence" value="ECO:0007669"/>
    <property type="project" value="InterPro"/>
</dbReference>
<dbReference type="FunFam" id="2.20.25.100:FF:000001">
    <property type="entry name" value="40S ribosomal protein S27"/>
    <property type="match status" value="1"/>
</dbReference>
<dbReference type="Gene3D" id="2.20.25.100">
    <property type="entry name" value="Zn-binding ribosomal proteins"/>
    <property type="match status" value="1"/>
</dbReference>
<dbReference type="HAMAP" id="MF_00371">
    <property type="entry name" value="Ribosomal_eS27"/>
    <property type="match status" value="1"/>
</dbReference>
<dbReference type="InterPro" id="IPR000592">
    <property type="entry name" value="Ribosomal_eS27"/>
</dbReference>
<dbReference type="InterPro" id="IPR023407">
    <property type="entry name" value="Ribosomal_eS27_Zn-bd_dom_sf"/>
</dbReference>
<dbReference type="InterPro" id="IPR011332">
    <property type="entry name" value="Ribosomal_zn-bd"/>
</dbReference>
<dbReference type="PANTHER" id="PTHR11594">
    <property type="entry name" value="40S RIBOSOMAL PROTEIN S27"/>
    <property type="match status" value="1"/>
</dbReference>
<dbReference type="Pfam" id="PF01667">
    <property type="entry name" value="Ribosomal_S27e"/>
    <property type="match status" value="1"/>
</dbReference>
<dbReference type="SUPFAM" id="SSF57829">
    <property type="entry name" value="Zn-binding ribosomal proteins"/>
    <property type="match status" value="1"/>
</dbReference>
<dbReference type="PROSITE" id="PS01168">
    <property type="entry name" value="RIBOSOMAL_S27E"/>
    <property type="match status" value="1"/>
</dbReference>
<organism>
    <name type="scientific">Bos taurus</name>
    <name type="common">Bovine</name>
    <dbReference type="NCBI Taxonomy" id="9913"/>
    <lineage>
        <taxon>Eukaryota</taxon>
        <taxon>Metazoa</taxon>
        <taxon>Chordata</taxon>
        <taxon>Craniata</taxon>
        <taxon>Vertebrata</taxon>
        <taxon>Euteleostomi</taxon>
        <taxon>Mammalia</taxon>
        <taxon>Eutheria</taxon>
        <taxon>Laurasiatheria</taxon>
        <taxon>Artiodactyla</taxon>
        <taxon>Ruminantia</taxon>
        <taxon>Pecora</taxon>
        <taxon>Bovidae</taxon>
        <taxon>Bovinae</taxon>
        <taxon>Bos</taxon>
    </lineage>
</organism>
<evidence type="ECO:0000255" key="1"/>
<evidence type="ECO:0000256" key="2">
    <source>
        <dbReference type="SAM" id="MobiDB-lite"/>
    </source>
</evidence>
<evidence type="ECO:0000305" key="3"/>
<keyword id="KW-0479">Metal-binding</keyword>
<keyword id="KW-1185">Reference proteome</keyword>
<keyword id="KW-0687">Ribonucleoprotein</keyword>
<keyword id="KW-0689">Ribosomal protein</keyword>
<keyword id="KW-0862">Zinc</keyword>
<keyword id="KW-0863">Zinc-finger</keyword>
<feature type="chain" id="PRO_0000230307" description="Small ribosomal subunit protein eS27-like">
    <location>
        <begin position="1"/>
        <end position="84"/>
    </location>
</feature>
<feature type="zinc finger region" description="C4-type" evidence="1">
    <location>
        <begin position="38"/>
        <end position="60"/>
    </location>
</feature>
<feature type="region of interest" description="Disordered" evidence="2">
    <location>
        <begin position="1"/>
        <end position="23"/>
    </location>
</feature>
<feature type="compositionally biased region" description="Basic and acidic residues" evidence="2">
    <location>
        <begin position="1"/>
        <end position="16"/>
    </location>
</feature>
<gene>
    <name type="primary">RPS27L</name>
</gene>
<comment type="cofactor">
    <cofactor evidence="3">
        <name>Zn(2+)</name>
        <dbReference type="ChEBI" id="CHEBI:29105"/>
    </cofactor>
    <text evidence="3">Binds 1 zinc ion per subunit.</text>
</comment>
<comment type="similarity">
    <text evidence="3">Belongs to the eukaryotic ribosomal protein eS27 family.</text>
</comment>
<proteinExistence type="inferred from homology"/>